<sequence length="272" mass="31023">MSTRNDVHLGHKARKRFGQNFLNDPYVIDGIVSAINPLPGQNLVEIGPGLGAITEPVGREVDKFTVIELDRDLAERLRNHPELGSKLTIHEGDAMRFDFTQLIKENNKLRIFGNLPYNISTPLMFHLFEFHKDVQDMHFMLQKEVVNRLAAGPGTKAYGRLTVMAQYFCKVMPVLEVPPTAFVPPPKVDSAVVRLVPYETLPYPATNLKWLDRVCREGFNQRRKTVRNCYKALLTKEQLEELGINPSMRPENLTLEQFVNMANWLDANHSAE</sequence>
<organism>
    <name type="scientific">Aliivibrio fischeri (strain ATCC 700601 / ES114)</name>
    <name type="common">Vibrio fischeri</name>
    <dbReference type="NCBI Taxonomy" id="312309"/>
    <lineage>
        <taxon>Bacteria</taxon>
        <taxon>Pseudomonadati</taxon>
        <taxon>Pseudomonadota</taxon>
        <taxon>Gammaproteobacteria</taxon>
        <taxon>Vibrionales</taxon>
        <taxon>Vibrionaceae</taxon>
        <taxon>Aliivibrio</taxon>
    </lineage>
</organism>
<name>RSMA_ALIF1</name>
<accession>Q5E865</accession>
<reference key="1">
    <citation type="journal article" date="2005" name="Proc. Natl. Acad. Sci. U.S.A.">
        <title>Complete genome sequence of Vibrio fischeri: a symbiotic bacterium with pathogenic congeners.</title>
        <authorList>
            <person name="Ruby E.G."/>
            <person name="Urbanowski M."/>
            <person name="Campbell J."/>
            <person name="Dunn A."/>
            <person name="Faini M."/>
            <person name="Gunsalus R."/>
            <person name="Lostroh P."/>
            <person name="Lupp C."/>
            <person name="McCann J."/>
            <person name="Millikan D."/>
            <person name="Schaefer A."/>
            <person name="Stabb E."/>
            <person name="Stevens A."/>
            <person name="Visick K."/>
            <person name="Whistler C."/>
            <person name="Greenberg E.P."/>
        </authorList>
    </citation>
    <scope>NUCLEOTIDE SEQUENCE [LARGE SCALE GENOMIC DNA]</scope>
    <source>
        <strain>ATCC 700601 / ES114</strain>
    </source>
</reference>
<keyword id="KW-0963">Cytoplasm</keyword>
<keyword id="KW-0489">Methyltransferase</keyword>
<keyword id="KW-1185">Reference proteome</keyword>
<keyword id="KW-0694">RNA-binding</keyword>
<keyword id="KW-0698">rRNA processing</keyword>
<keyword id="KW-0949">S-adenosyl-L-methionine</keyword>
<keyword id="KW-0808">Transferase</keyword>
<protein>
    <recommendedName>
        <fullName evidence="1">Ribosomal RNA small subunit methyltransferase A</fullName>
        <ecNumber evidence="1">2.1.1.182</ecNumber>
    </recommendedName>
    <alternativeName>
        <fullName evidence="1">16S rRNA (adenine(1518)-N(6)/adenine(1519)-N(6))-dimethyltransferase</fullName>
    </alternativeName>
    <alternativeName>
        <fullName evidence="1">16S rRNA dimethyladenosine transferase</fullName>
    </alternativeName>
    <alternativeName>
        <fullName evidence="1">16S rRNA dimethylase</fullName>
    </alternativeName>
    <alternativeName>
        <fullName evidence="1">S-adenosylmethionine-6-N', N'-adenosyl(rRNA) dimethyltransferase</fullName>
    </alternativeName>
</protein>
<proteinExistence type="inferred from homology"/>
<comment type="function">
    <text evidence="1">Specifically dimethylates two adjacent adenosines (A1518 and A1519) in the loop of a conserved hairpin near the 3'-end of 16S rRNA in the 30S particle. May play a critical role in biogenesis of 30S subunits.</text>
</comment>
<comment type="catalytic activity">
    <reaction evidence="1">
        <text>adenosine(1518)/adenosine(1519) in 16S rRNA + 4 S-adenosyl-L-methionine = N(6)-dimethyladenosine(1518)/N(6)-dimethyladenosine(1519) in 16S rRNA + 4 S-adenosyl-L-homocysteine + 4 H(+)</text>
        <dbReference type="Rhea" id="RHEA:19609"/>
        <dbReference type="Rhea" id="RHEA-COMP:10232"/>
        <dbReference type="Rhea" id="RHEA-COMP:10233"/>
        <dbReference type="ChEBI" id="CHEBI:15378"/>
        <dbReference type="ChEBI" id="CHEBI:57856"/>
        <dbReference type="ChEBI" id="CHEBI:59789"/>
        <dbReference type="ChEBI" id="CHEBI:74411"/>
        <dbReference type="ChEBI" id="CHEBI:74493"/>
        <dbReference type="EC" id="2.1.1.182"/>
    </reaction>
</comment>
<comment type="subcellular location">
    <subcellularLocation>
        <location evidence="1">Cytoplasm</location>
    </subcellularLocation>
</comment>
<comment type="similarity">
    <text evidence="1">Belongs to the class I-like SAM-binding methyltransferase superfamily. rRNA adenine N(6)-methyltransferase family. RsmA subfamily.</text>
</comment>
<feature type="chain" id="PRO_0000101637" description="Ribosomal RNA small subunit methyltransferase A">
    <location>
        <begin position="1"/>
        <end position="272"/>
    </location>
</feature>
<feature type="binding site" evidence="1">
    <location>
        <position position="20"/>
    </location>
    <ligand>
        <name>S-adenosyl-L-methionine</name>
        <dbReference type="ChEBI" id="CHEBI:59789"/>
    </ligand>
</feature>
<feature type="binding site" evidence="1">
    <location>
        <position position="22"/>
    </location>
    <ligand>
        <name>S-adenosyl-L-methionine</name>
        <dbReference type="ChEBI" id="CHEBI:59789"/>
    </ligand>
</feature>
<feature type="binding site" evidence="1">
    <location>
        <position position="47"/>
    </location>
    <ligand>
        <name>S-adenosyl-L-methionine</name>
        <dbReference type="ChEBI" id="CHEBI:59789"/>
    </ligand>
</feature>
<feature type="binding site" evidence="1">
    <location>
        <position position="68"/>
    </location>
    <ligand>
        <name>S-adenosyl-L-methionine</name>
        <dbReference type="ChEBI" id="CHEBI:59789"/>
    </ligand>
</feature>
<feature type="binding site" evidence="1">
    <location>
        <position position="93"/>
    </location>
    <ligand>
        <name>S-adenosyl-L-methionine</name>
        <dbReference type="ChEBI" id="CHEBI:59789"/>
    </ligand>
</feature>
<feature type="binding site" evidence="1">
    <location>
        <position position="114"/>
    </location>
    <ligand>
        <name>S-adenosyl-L-methionine</name>
        <dbReference type="ChEBI" id="CHEBI:59789"/>
    </ligand>
</feature>
<dbReference type="EC" id="2.1.1.182" evidence="1"/>
<dbReference type="EMBL" id="CP000020">
    <property type="protein sequence ID" value="AAW84781.1"/>
    <property type="molecule type" value="Genomic_DNA"/>
</dbReference>
<dbReference type="RefSeq" id="WP_005417325.1">
    <property type="nucleotide sequence ID" value="NZ_CAWLES010000001.1"/>
</dbReference>
<dbReference type="RefSeq" id="YP_203669.1">
    <property type="nucleotide sequence ID" value="NC_006840.2"/>
</dbReference>
<dbReference type="SMR" id="Q5E865"/>
<dbReference type="STRING" id="312309.VF_0286"/>
<dbReference type="EnsemblBacteria" id="AAW84781">
    <property type="protein sequence ID" value="AAW84781"/>
    <property type="gene ID" value="VF_0286"/>
</dbReference>
<dbReference type="GeneID" id="54162906"/>
<dbReference type="KEGG" id="vfi:VF_0286"/>
<dbReference type="PATRIC" id="fig|312309.11.peg.280"/>
<dbReference type="eggNOG" id="COG0030">
    <property type="taxonomic scope" value="Bacteria"/>
</dbReference>
<dbReference type="HOGENOM" id="CLU_041220_0_1_6"/>
<dbReference type="OrthoDB" id="9814755at2"/>
<dbReference type="Proteomes" id="UP000000537">
    <property type="component" value="Chromosome I"/>
</dbReference>
<dbReference type="GO" id="GO:0005829">
    <property type="term" value="C:cytosol"/>
    <property type="evidence" value="ECO:0007669"/>
    <property type="project" value="TreeGrafter"/>
</dbReference>
<dbReference type="GO" id="GO:0052908">
    <property type="term" value="F:16S rRNA (adenine(1518)-N(6)/adenine(1519)-N(6))-dimethyltransferase activity"/>
    <property type="evidence" value="ECO:0007669"/>
    <property type="project" value="UniProtKB-EC"/>
</dbReference>
<dbReference type="GO" id="GO:0003723">
    <property type="term" value="F:RNA binding"/>
    <property type="evidence" value="ECO:0007669"/>
    <property type="project" value="UniProtKB-KW"/>
</dbReference>
<dbReference type="FunFam" id="1.10.8.100:FF:000001">
    <property type="entry name" value="Ribosomal RNA small subunit methyltransferase A"/>
    <property type="match status" value="1"/>
</dbReference>
<dbReference type="FunFam" id="3.40.50.150:FF:000006">
    <property type="entry name" value="Ribosomal RNA small subunit methyltransferase A"/>
    <property type="match status" value="1"/>
</dbReference>
<dbReference type="Gene3D" id="1.10.8.100">
    <property type="entry name" value="Ribosomal RNA adenine dimethylase-like, domain 2"/>
    <property type="match status" value="1"/>
</dbReference>
<dbReference type="Gene3D" id="3.40.50.150">
    <property type="entry name" value="Vaccinia Virus protein VP39"/>
    <property type="match status" value="1"/>
</dbReference>
<dbReference type="HAMAP" id="MF_00607">
    <property type="entry name" value="16SrRNA_methyltr_A"/>
    <property type="match status" value="1"/>
</dbReference>
<dbReference type="InterPro" id="IPR001737">
    <property type="entry name" value="KsgA/Erm"/>
</dbReference>
<dbReference type="InterPro" id="IPR023165">
    <property type="entry name" value="rRNA_Ade_diMease-like_C"/>
</dbReference>
<dbReference type="InterPro" id="IPR020596">
    <property type="entry name" value="rRNA_Ade_Mease_Trfase_CS"/>
</dbReference>
<dbReference type="InterPro" id="IPR020598">
    <property type="entry name" value="rRNA_Ade_methylase_Trfase_N"/>
</dbReference>
<dbReference type="InterPro" id="IPR011530">
    <property type="entry name" value="rRNA_adenine_dimethylase"/>
</dbReference>
<dbReference type="InterPro" id="IPR029063">
    <property type="entry name" value="SAM-dependent_MTases_sf"/>
</dbReference>
<dbReference type="NCBIfam" id="TIGR00755">
    <property type="entry name" value="ksgA"/>
    <property type="match status" value="1"/>
</dbReference>
<dbReference type="PANTHER" id="PTHR11727">
    <property type="entry name" value="DIMETHYLADENOSINE TRANSFERASE"/>
    <property type="match status" value="1"/>
</dbReference>
<dbReference type="PANTHER" id="PTHR11727:SF7">
    <property type="entry name" value="DIMETHYLADENOSINE TRANSFERASE-RELATED"/>
    <property type="match status" value="1"/>
</dbReference>
<dbReference type="Pfam" id="PF00398">
    <property type="entry name" value="RrnaAD"/>
    <property type="match status" value="1"/>
</dbReference>
<dbReference type="SMART" id="SM00650">
    <property type="entry name" value="rADc"/>
    <property type="match status" value="1"/>
</dbReference>
<dbReference type="SUPFAM" id="SSF53335">
    <property type="entry name" value="S-adenosyl-L-methionine-dependent methyltransferases"/>
    <property type="match status" value="1"/>
</dbReference>
<dbReference type="PROSITE" id="PS01131">
    <property type="entry name" value="RRNA_A_DIMETH"/>
    <property type="match status" value="1"/>
</dbReference>
<dbReference type="PROSITE" id="PS51689">
    <property type="entry name" value="SAM_RNA_A_N6_MT"/>
    <property type="match status" value="1"/>
</dbReference>
<gene>
    <name evidence="1" type="primary">rsmA</name>
    <name evidence="1" type="synonym">ksgA</name>
    <name type="ordered locus">VF_0286</name>
</gene>
<evidence type="ECO:0000255" key="1">
    <source>
        <dbReference type="HAMAP-Rule" id="MF_00607"/>
    </source>
</evidence>